<organism>
    <name type="scientific">Shewanella amazonensis (strain ATCC BAA-1098 / SB2B)</name>
    <dbReference type="NCBI Taxonomy" id="326297"/>
    <lineage>
        <taxon>Bacteria</taxon>
        <taxon>Pseudomonadati</taxon>
        <taxon>Pseudomonadota</taxon>
        <taxon>Gammaproteobacteria</taxon>
        <taxon>Alteromonadales</taxon>
        <taxon>Shewanellaceae</taxon>
        <taxon>Shewanella</taxon>
    </lineage>
</organism>
<name>CDD_SHEAM</name>
<accession>A1S723</accession>
<reference key="1">
    <citation type="submission" date="2006-12" db="EMBL/GenBank/DDBJ databases">
        <title>Complete sequence of Shewanella amazonensis SB2B.</title>
        <authorList>
            <consortium name="US DOE Joint Genome Institute"/>
            <person name="Copeland A."/>
            <person name="Lucas S."/>
            <person name="Lapidus A."/>
            <person name="Barry K."/>
            <person name="Detter J.C."/>
            <person name="Glavina del Rio T."/>
            <person name="Hammon N."/>
            <person name="Israni S."/>
            <person name="Dalin E."/>
            <person name="Tice H."/>
            <person name="Pitluck S."/>
            <person name="Munk A.C."/>
            <person name="Brettin T."/>
            <person name="Bruce D."/>
            <person name="Han C."/>
            <person name="Tapia R."/>
            <person name="Gilna P."/>
            <person name="Schmutz J."/>
            <person name="Larimer F."/>
            <person name="Land M."/>
            <person name="Hauser L."/>
            <person name="Kyrpides N."/>
            <person name="Mikhailova N."/>
            <person name="Fredrickson J."/>
            <person name="Richardson P."/>
        </authorList>
    </citation>
    <scope>NUCLEOTIDE SEQUENCE [LARGE SCALE GENOMIC DNA]</scope>
    <source>
        <strain>ATCC BAA-1098 / SB2B</strain>
    </source>
</reference>
<feature type="chain" id="PRO_1000068959" description="Cytidine deaminase">
    <location>
        <begin position="1"/>
        <end position="296"/>
    </location>
</feature>
<feature type="domain" description="CMP/dCMP-type deaminase 1" evidence="2">
    <location>
        <begin position="47"/>
        <end position="167"/>
    </location>
</feature>
<feature type="domain" description="CMP/dCMP-type deaminase 2" evidence="2">
    <location>
        <begin position="186"/>
        <end position="296"/>
    </location>
</feature>
<feature type="active site" description="Proton donor" evidence="1">
    <location>
        <position position="103"/>
    </location>
</feature>
<feature type="binding site" evidence="1">
    <location>
        <begin position="88"/>
        <end position="90"/>
    </location>
    <ligand>
        <name>substrate</name>
    </ligand>
</feature>
<feature type="binding site" evidence="1">
    <location>
        <position position="101"/>
    </location>
    <ligand>
        <name>Zn(2+)</name>
        <dbReference type="ChEBI" id="CHEBI:29105"/>
        <note>catalytic</note>
    </ligand>
</feature>
<feature type="binding site" evidence="1">
    <location>
        <position position="128"/>
    </location>
    <ligand>
        <name>Zn(2+)</name>
        <dbReference type="ChEBI" id="CHEBI:29105"/>
        <note>catalytic</note>
    </ligand>
</feature>
<feature type="binding site" evidence="1">
    <location>
        <position position="131"/>
    </location>
    <ligand>
        <name>Zn(2+)</name>
        <dbReference type="ChEBI" id="CHEBI:29105"/>
        <note>catalytic</note>
    </ligand>
</feature>
<gene>
    <name evidence="1" type="primary">cdd</name>
    <name type="ordered locus">Sama_1974</name>
</gene>
<keyword id="KW-0378">Hydrolase</keyword>
<keyword id="KW-0479">Metal-binding</keyword>
<keyword id="KW-1185">Reference proteome</keyword>
<keyword id="KW-0862">Zinc</keyword>
<dbReference type="EC" id="3.5.4.5" evidence="1"/>
<dbReference type="EMBL" id="CP000507">
    <property type="protein sequence ID" value="ABM00180.1"/>
    <property type="molecule type" value="Genomic_DNA"/>
</dbReference>
<dbReference type="RefSeq" id="WP_011760087.1">
    <property type="nucleotide sequence ID" value="NC_008700.1"/>
</dbReference>
<dbReference type="SMR" id="A1S723"/>
<dbReference type="STRING" id="326297.Sama_1974"/>
<dbReference type="KEGG" id="saz:Sama_1974"/>
<dbReference type="eggNOG" id="COG0295">
    <property type="taxonomic scope" value="Bacteria"/>
</dbReference>
<dbReference type="HOGENOM" id="CLU_052424_0_0_6"/>
<dbReference type="OrthoDB" id="9795347at2"/>
<dbReference type="Proteomes" id="UP000009175">
    <property type="component" value="Chromosome"/>
</dbReference>
<dbReference type="GO" id="GO:0005829">
    <property type="term" value="C:cytosol"/>
    <property type="evidence" value="ECO:0007669"/>
    <property type="project" value="TreeGrafter"/>
</dbReference>
<dbReference type="GO" id="GO:0004126">
    <property type="term" value="F:cytidine deaminase activity"/>
    <property type="evidence" value="ECO:0007669"/>
    <property type="project" value="UniProtKB-UniRule"/>
</dbReference>
<dbReference type="GO" id="GO:0042802">
    <property type="term" value="F:identical protein binding"/>
    <property type="evidence" value="ECO:0007669"/>
    <property type="project" value="UniProtKB-ARBA"/>
</dbReference>
<dbReference type="GO" id="GO:0008270">
    <property type="term" value="F:zinc ion binding"/>
    <property type="evidence" value="ECO:0007669"/>
    <property type="project" value="UniProtKB-UniRule"/>
</dbReference>
<dbReference type="GO" id="GO:0009972">
    <property type="term" value="P:cytidine deamination"/>
    <property type="evidence" value="ECO:0007669"/>
    <property type="project" value="InterPro"/>
</dbReference>
<dbReference type="CDD" id="cd01283">
    <property type="entry name" value="cytidine_deaminase"/>
    <property type="match status" value="1"/>
</dbReference>
<dbReference type="FunFam" id="3.40.140.10:FF:000007">
    <property type="entry name" value="Cytidine deaminase"/>
    <property type="match status" value="1"/>
</dbReference>
<dbReference type="Gene3D" id="3.40.140.10">
    <property type="entry name" value="Cytidine Deaminase, domain 2"/>
    <property type="match status" value="2"/>
</dbReference>
<dbReference type="HAMAP" id="MF_01558">
    <property type="entry name" value="Cyt_deam"/>
    <property type="match status" value="1"/>
</dbReference>
<dbReference type="InterPro" id="IPR016192">
    <property type="entry name" value="APOBEC/CMP_deaminase_Zn-bd"/>
</dbReference>
<dbReference type="InterPro" id="IPR002125">
    <property type="entry name" value="CMP_dCMP_dom"/>
</dbReference>
<dbReference type="InterPro" id="IPR013171">
    <property type="entry name" value="Cyd/dCyd_deaminase_Zn-bd"/>
</dbReference>
<dbReference type="InterPro" id="IPR050202">
    <property type="entry name" value="Cyt/Deoxycyt_deaminase"/>
</dbReference>
<dbReference type="InterPro" id="IPR016193">
    <property type="entry name" value="Cytidine_deaminase-like"/>
</dbReference>
<dbReference type="InterPro" id="IPR020797">
    <property type="entry name" value="Cytidine_deaminase_bacteria"/>
</dbReference>
<dbReference type="NCBIfam" id="NF006537">
    <property type="entry name" value="PRK09027.1"/>
    <property type="match status" value="1"/>
</dbReference>
<dbReference type="PANTHER" id="PTHR11644">
    <property type="entry name" value="CYTIDINE DEAMINASE"/>
    <property type="match status" value="1"/>
</dbReference>
<dbReference type="PANTHER" id="PTHR11644:SF2">
    <property type="entry name" value="CYTIDINE DEAMINASE"/>
    <property type="match status" value="1"/>
</dbReference>
<dbReference type="Pfam" id="PF00383">
    <property type="entry name" value="dCMP_cyt_deam_1"/>
    <property type="match status" value="1"/>
</dbReference>
<dbReference type="Pfam" id="PF08211">
    <property type="entry name" value="dCMP_cyt_deam_2"/>
    <property type="match status" value="1"/>
</dbReference>
<dbReference type="PIRSF" id="PIRSF006334">
    <property type="entry name" value="Cdd_plus_pseudo"/>
    <property type="match status" value="1"/>
</dbReference>
<dbReference type="SUPFAM" id="SSF53927">
    <property type="entry name" value="Cytidine deaminase-like"/>
    <property type="match status" value="2"/>
</dbReference>
<dbReference type="PROSITE" id="PS00903">
    <property type="entry name" value="CYT_DCMP_DEAMINASES_1"/>
    <property type="match status" value="1"/>
</dbReference>
<dbReference type="PROSITE" id="PS51747">
    <property type="entry name" value="CYT_DCMP_DEAMINASES_2"/>
    <property type="match status" value="2"/>
</dbReference>
<evidence type="ECO:0000255" key="1">
    <source>
        <dbReference type="HAMAP-Rule" id="MF_01558"/>
    </source>
</evidence>
<evidence type="ECO:0000255" key="2">
    <source>
        <dbReference type="PROSITE-ProRule" id="PRU01083"/>
    </source>
</evidence>
<comment type="function">
    <text evidence="1">This enzyme scavenges exogenous and endogenous cytidine and 2'-deoxycytidine for UMP synthesis.</text>
</comment>
<comment type="catalytic activity">
    <reaction evidence="1">
        <text>cytidine + H2O + H(+) = uridine + NH4(+)</text>
        <dbReference type="Rhea" id="RHEA:16069"/>
        <dbReference type="ChEBI" id="CHEBI:15377"/>
        <dbReference type="ChEBI" id="CHEBI:15378"/>
        <dbReference type="ChEBI" id="CHEBI:16704"/>
        <dbReference type="ChEBI" id="CHEBI:17562"/>
        <dbReference type="ChEBI" id="CHEBI:28938"/>
        <dbReference type="EC" id="3.5.4.5"/>
    </reaction>
</comment>
<comment type="catalytic activity">
    <reaction evidence="1">
        <text>2'-deoxycytidine + H2O + H(+) = 2'-deoxyuridine + NH4(+)</text>
        <dbReference type="Rhea" id="RHEA:13433"/>
        <dbReference type="ChEBI" id="CHEBI:15377"/>
        <dbReference type="ChEBI" id="CHEBI:15378"/>
        <dbReference type="ChEBI" id="CHEBI:15698"/>
        <dbReference type="ChEBI" id="CHEBI:16450"/>
        <dbReference type="ChEBI" id="CHEBI:28938"/>
        <dbReference type="EC" id="3.5.4.5"/>
    </reaction>
</comment>
<comment type="cofactor">
    <cofactor evidence="1">
        <name>Zn(2+)</name>
        <dbReference type="ChEBI" id="CHEBI:29105"/>
    </cofactor>
    <text evidence="1">Binds 1 zinc ion.</text>
</comment>
<comment type="subunit">
    <text evidence="1">Homodimer.</text>
</comment>
<comment type="similarity">
    <text evidence="1">Belongs to the cytidine and deoxycytidylate deaminase family.</text>
</comment>
<protein>
    <recommendedName>
        <fullName evidence="1">Cytidine deaminase</fullName>
        <ecNumber evidence="1">3.5.4.5</ecNumber>
    </recommendedName>
    <alternativeName>
        <fullName evidence="1">Cytidine aminohydrolase</fullName>
        <shortName evidence="1">CDA</shortName>
    </alternativeName>
</protein>
<proteinExistence type="inferred from homology"/>
<sequence length="296" mass="31802">MQDRFVRRINELPKALADELLPMLGEQFCGHLDAQQVKQLCAVSAMDSHELGLALLPIAAALAKPPVSNFYVGAIAVGSGGDFYMGANLELQGEALFHSVHAEQSAISHAWLSGETQISDIIVNASPCGHCRQFMNELVQGQAIRIHLPGQDTAPLSHYLPYAFGPADLNVTAPLLSKQQTELVLESDDPLLIEALDHAGLSYAPYSQCHAAVVLETEDGASFCGRYAENAAFNPSMLPMQMALSALVRHNRSFSDIKRAVLLESSQGKISLVGATMDALHAVAVVELEHLVVDPV</sequence>